<sequence length="176" mass="20695">MDQNNLSKSSEEIVEQRGIVSNRLYKDGITNNSLGNDHIGVELLSVKPEKLYEAISSLKKYGFNYLQCQGGYDEGPGKRLVSFYHLISLQDIEELEEIKEIRVKVFLNRDSDLSVPSLYKIFKGSDWQERETYDMYGINFQDHPNPKRILMPEDWRGWPLRKDYIQPDFYELQDAY</sequence>
<reference key="1">
    <citation type="journal article" date="2007" name="PLoS Genet.">
        <title>Patterns and implications of gene gain and loss in the evolution of Prochlorococcus.</title>
        <authorList>
            <person name="Kettler G.C."/>
            <person name="Martiny A.C."/>
            <person name="Huang K."/>
            <person name="Zucker J."/>
            <person name="Coleman M.L."/>
            <person name="Rodrigue S."/>
            <person name="Chen F."/>
            <person name="Lapidus A."/>
            <person name="Ferriera S."/>
            <person name="Johnson J."/>
            <person name="Steglich C."/>
            <person name="Church G.M."/>
            <person name="Richardson P."/>
            <person name="Chisholm S.W."/>
        </authorList>
    </citation>
    <scope>NUCLEOTIDE SEQUENCE [LARGE SCALE GENOMIC DNA]</scope>
    <source>
        <strain>MIT 9515</strain>
    </source>
</reference>
<protein>
    <recommendedName>
        <fullName evidence="1">NAD(P)H-quinone oxidoreductase subunit J</fullName>
        <ecNumber evidence="1">7.1.1.-</ecNumber>
    </recommendedName>
    <alternativeName>
        <fullName>NAD(P)H dehydrogenase subunit J</fullName>
    </alternativeName>
    <alternativeName>
        <fullName evidence="1">NADH-plastoquinone oxidoreductase subunit J</fullName>
    </alternativeName>
    <alternativeName>
        <fullName evidence="1">NDH-1 subunit J</fullName>
        <shortName evidence="1">NDH-J</shortName>
    </alternativeName>
</protein>
<gene>
    <name evidence="1" type="primary">ndhJ</name>
    <name type="ordered locus">P9515_03251</name>
</gene>
<feature type="chain" id="PRO_0000358169" description="NAD(P)H-quinone oxidoreductase subunit J">
    <location>
        <begin position="1"/>
        <end position="176"/>
    </location>
</feature>
<accession>A2BUS3</accession>
<keyword id="KW-0472">Membrane</keyword>
<keyword id="KW-0520">NAD</keyword>
<keyword id="KW-0521">NADP</keyword>
<keyword id="KW-0618">Plastoquinone</keyword>
<keyword id="KW-0874">Quinone</keyword>
<keyword id="KW-0793">Thylakoid</keyword>
<keyword id="KW-1278">Translocase</keyword>
<keyword id="KW-0813">Transport</keyword>
<evidence type="ECO:0000255" key="1">
    <source>
        <dbReference type="HAMAP-Rule" id="MF_01357"/>
    </source>
</evidence>
<organism>
    <name type="scientific">Prochlorococcus marinus (strain MIT 9515)</name>
    <dbReference type="NCBI Taxonomy" id="167542"/>
    <lineage>
        <taxon>Bacteria</taxon>
        <taxon>Bacillati</taxon>
        <taxon>Cyanobacteriota</taxon>
        <taxon>Cyanophyceae</taxon>
        <taxon>Synechococcales</taxon>
        <taxon>Prochlorococcaceae</taxon>
        <taxon>Prochlorococcus</taxon>
    </lineage>
</organism>
<dbReference type="EC" id="7.1.1.-" evidence="1"/>
<dbReference type="EMBL" id="CP000552">
    <property type="protein sequence ID" value="ABM71534.1"/>
    <property type="molecule type" value="Genomic_DNA"/>
</dbReference>
<dbReference type="RefSeq" id="WP_011819643.1">
    <property type="nucleotide sequence ID" value="NC_008817.1"/>
</dbReference>
<dbReference type="SMR" id="A2BUS3"/>
<dbReference type="STRING" id="167542.P9515_03251"/>
<dbReference type="GeneID" id="60200499"/>
<dbReference type="KEGG" id="pmc:P9515_03251"/>
<dbReference type="eggNOG" id="COG0852">
    <property type="taxonomic scope" value="Bacteria"/>
</dbReference>
<dbReference type="HOGENOM" id="CLU_042628_9_1_3"/>
<dbReference type="OrthoDB" id="9803286at2"/>
<dbReference type="Proteomes" id="UP000001589">
    <property type="component" value="Chromosome"/>
</dbReference>
<dbReference type="GO" id="GO:0031676">
    <property type="term" value="C:plasma membrane-derived thylakoid membrane"/>
    <property type="evidence" value="ECO:0007669"/>
    <property type="project" value="UniProtKB-SubCell"/>
</dbReference>
<dbReference type="GO" id="GO:0008137">
    <property type="term" value="F:NADH dehydrogenase (ubiquinone) activity"/>
    <property type="evidence" value="ECO:0007669"/>
    <property type="project" value="InterPro"/>
</dbReference>
<dbReference type="GO" id="GO:0048038">
    <property type="term" value="F:quinone binding"/>
    <property type="evidence" value="ECO:0007669"/>
    <property type="project" value="UniProtKB-KW"/>
</dbReference>
<dbReference type="GO" id="GO:0019684">
    <property type="term" value="P:photosynthesis, light reaction"/>
    <property type="evidence" value="ECO:0007669"/>
    <property type="project" value="UniProtKB-UniRule"/>
</dbReference>
<dbReference type="Gene3D" id="3.30.460.80">
    <property type="entry name" value="NADH:ubiquinone oxidoreductase, 30kDa subunit"/>
    <property type="match status" value="1"/>
</dbReference>
<dbReference type="HAMAP" id="MF_01357">
    <property type="entry name" value="NDH1_NuoC"/>
    <property type="match status" value="1"/>
</dbReference>
<dbReference type="InterPro" id="IPR010218">
    <property type="entry name" value="NADH_DH_suC"/>
</dbReference>
<dbReference type="InterPro" id="IPR037232">
    <property type="entry name" value="NADH_quin_OxRdtase_su_C/D-like"/>
</dbReference>
<dbReference type="InterPro" id="IPR001268">
    <property type="entry name" value="NADH_UbQ_OxRdtase_30kDa_su"/>
</dbReference>
<dbReference type="InterPro" id="IPR020396">
    <property type="entry name" value="NADH_UbQ_OxRdtase_CS"/>
</dbReference>
<dbReference type="NCBIfam" id="NF009141">
    <property type="entry name" value="PRK12494.1"/>
    <property type="match status" value="1"/>
</dbReference>
<dbReference type="PANTHER" id="PTHR10884:SF14">
    <property type="entry name" value="NADH DEHYDROGENASE [UBIQUINONE] IRON-SULFUR PROTEIN 3, MITOCHONDRIAL"/>
    <property type="match status" value="1"/>
</dbReference>
<dbReference type="PANTHER" id="PTHR10884">
    <property type="entry name" value="NADH DEHYDROGENASE UBIQUINONE IRON-SULFUR PROTEIN 3"/>
    <property type="match status" value="1"/>
</dbReference>
<dbReference type="Pfam" id="PF00329">
    <property type="entry name" value="Complex1_30kDa"/>
    <property type="match status" value="1"/>
</dbReference>
<dbReference type="SUPFAM" id="SSF143243">
    <property type="entry name" value="Nqo5-like"/>
    <property type="match status" value="1"/>
</dbReference>
<dbReference type="PROSITE" id="PS00542">
    <property type="entry name" value="COMPLEX1_30K"/>
    <property type="match status" value="1"/>
</dbReference>
<name>NDHJ_PROM5</name>
<proteinExistence type="inferred from homology"/>
<comment type="function">
    <text evidence="1">NDH-1 shuttles electrons from an unknown electron donor, via FMN and iron-sulfur (Fe-S) centers, to quinones in the respiratory and/or the photosynthetic chain. The immediate electron acceptor for the enzyme in this species is believed to be plastoquinone. Couples the redox reaction to proton translocation, and thus conserves the redox energy in a proton gradient. Cyanobacterial NDH-1 also plays a role in inorganic carbon-concentration.</text>
</comment>
<comment type="catalytic activity">
    <reaction evidence="1">
        <text>a plastoquinone + NADH + (n+1) H(+)(in) = a plastoquinol + NAD(+) + n H(+)(out)</text>
        <dbReference type="Rhea" id="RHEA:42608"/>
        <dbReference type="Rhea" id="RHEA-COMP:9561"/>
        <dbReference type="Rhea" id="RHEA-COMP:9562"/>
        <dbReference type="ChEBI" id="CHEBI:15378"/>
        <dbReference type="ChEBI" id="CHEBI:17757"/>
        <dbReference type="ChEBI" id="CHEBI:57540"/>
        <dbReference type="ChEBI" id="CHEBI:57945"/>
        <dbReference type="ChEBI" id="CHEBI:62192"/>
    </reaction>
</comment>
<comment type="catalytic activity">
    <reaction evidence="1">
        <text>a plastoquinone + NADPH + (n+1) H(+)(in) = a plastoquinol + NADP(+) + n H(+)(out)</text>
        <dbReference type="Rhea" id="RHEA:42612"/>
        <dbReference type="Rhea" id="RHEA-COMP:9561"/>
        <dbReference type="Rhea" id="RHEA-COMP:9562"/>
        <dbReference type="ChEBI" id="CHEBI:15378"/>
        <dbReference type="ChEBI" id="CHEBI:17757"/>
        <dbReference type="ChEBI" id="CHEBI:57783"/>
        <dbReference type="ChEBI" id="CHEBI:58349"/>
        <dbReference type="ChEBI" id="CHEBI:62192"/>
    </reaction>
</comment>
<comment type="subunit">
    <text evidence="1">NDH-1 can be composed of about 15 different subunits; different subcomplexes with different compositions have been identified which probably have different functions.</text>
</comment>
<comment type="subcellular location">
    <subcellularLocation>
        <location evidence="1">Cellular thylakoid membrane</location>
        <topology evidence="1">Peripheral membrane protein</topology>
        <orientation evidence="1">Cytoplasmic side</orientation>
    </subcellularLocation>
</comment>
<comment type="similarity">
    <text evidence="1">Belongs to the complex I 30 kDa subunit family.</text>
</comment>